<comment type="function">
    <text evidence="1">Catalyzes the conversion of GTP to 2,5-diamino-6-ribosylamino-4(3H)-pyrimidinone 5'-phosphate (DARP), formate and pyrophosphate.</text>
</comment>
<comment type="catalytic activity">
    <reaction evidence="1">
        <text>GTP + 4 H2O = 2,5-diamino-6-hydroxy-4-(5-phosphoribosylamino)-pyrimidine + formate + 2 phosphate + 3 H(+)</text>
        <dbReference type="Rhea" id="RHEA:23704"/>
        <dbReference type="ChEBI" id="CHEBI:15377"/>
        <dbReference type="ChEBI" id="CHEBI:15378"/>
        <dbReference type="ChEBI" id="CHEBI:15740"/>
        <dbReference type="ChEBI" id="CHEBI:37565"/>
        <dbReference type="ChEBI" id="CHEBI:43474"/>
        <dbReference type="ChEBI" id="CHEBI:58614"/>
        <dbReference type="EC" id="3.5.4.25"/>
    </reaction>
</comment>
<comment type="cofactor">
    <cofactor evidence="1">
        <name>Zn(2+)</name>
        <dbReference type="ChEBI" id="CHEBI:29105"/>
    </cofactor>
    <text evidence="1">Binds 1 zinc ion per subunit.</text>
</comment>
<comment type="pathway">
    <text evidence="1">Cofactor biosynthesis; riboflavin biosynthesis; 5-amino-6-(D-ribitylamino)uracil from GTP: step 1/4.</text>
</comment>
<comment type="similarity">
    <text evidence="1">Belongs to the GTP cyclohydrolase II family.</text>
</comment>
<reference key="1">
    <citation type="submission" date="2008-01" db="EMBL/GenBank/DDBJ databases">
        <title>Complete sequence of Shewanella halifaxensis HAW-EB4.</title>
        <authorList>
            <consortium name="US DOE Joint Genome Institute"/>
            <person name="Copeland A."/>
            <person name="Lucas S."/>
            <person name="Lapidus A."/>
            <person name="Glavina del Rio T."/>
            <person name="Dalin E."/>
            <person name="Tice H."/>
            <person name="Bruce D."/>
            <person name="Goodwin L."/>
            <person name="Pitluck S."/>
            <person name="Sims D."/>
            <person name="Brettin T."/>
            <person name="Detter J.C."/>
            <person name="Han C."/>
            <person name="Kuske C.R."/>
            <person name="Schmutz J."/>
            <person name="Larimer F."/>
            <person name="Land M."/>
            <person name="Hauser L."/>
            <person name="Kyrpides N."/>
            <person name="Kim E."/>
            <person name="Zhao J.-S."/>
            <person name="Richardson P."/>
        </authorList>
    </citation>
    <scope>NUCLEOTIDE SEQUENCE [LARGE SCALE GENOMIC DNA]</scope>
    <source>
        <strain>HAW-EB4</strain>
    </source>
</reference>
<protein>
    <recommendedName>
        <fullName evidence="1">GTP cyclohydrolase-2</fullName>
        <ecNumber evidence="1">3.5.4.25</ecNumber>
    </recommendedName>
    <alternativeName>
        <fullName evidence="1">GTP cyclohydrolase II</fullName>
    </alternativeName>
</protein>
<evidence type="ECO:0000255" key="1">
    <source>
        <dbReference type="HAMAP-Rule" id="MF_00179"/>
    </source>
</evidence>
<accession>B0TL40</accession>
<proteinExistence type="inferred from homology"/>
<gene>
    <name evidence="1" type="primary">ribA</name>
    <name type="ordered locus">Shal_2689</name>
</gene>
<dbReference type="EC" id="3.5.4.25" evidence="1"/>
<dbReference type="EMBL" id="CP000931">
    <property type="protein sequence ID" value="ABZ77242.1"/>
    <property type="molecule type" value="Genomic_DNA"/>
</dbReference>
<dbReference type="RefSeq" id="WP_012277770.1">
    <property type="nucleotide sequence ID" value="NC_010334.1"/>
</dbReference>
<dbReference type="SMR" id="B0TL40"/>
<dbReference type="STRING" id="458817.Shal_2689"/>
<dbReference type="KEGG" id="shl:Shal_2689"/>
<dbReference type="eggNOG" id="COG0807">
    <property type="taxonomic scope" value="Bacteria"/>
</dbReference>
<dbReference type="HOGENOM" id="CLU_020273_2_1_6"/>
<dbReference type="OrthoDB" id="9793111at2"/>
<dbReference type="UniPathway" id="UPA00275">
    <property type="reaction ID" value="UER00400"/>
</dbReference>
<dbReference type="Proteomes" id="UP000001317">
    <property type="component" value="Chromosome"/>
</dbReference>
<dbReference type="GO" id="GO:0005829">
    <property type="term" value="C:cytosol"/>
    <property type="evidence" value="ECO:0007669"/>
    <property type="project" value="TreeGrafter"/>
</dbReference>
<dbReference type="GO" id="GO:0005525">
    <property type="term" value="F:GTP binding"/>
    <property type="evidence" value="ECO:0007669"/>
    <property type="project" value="UniProtKB-KW"/>
</dbReference>
<dbReference type="GO" id="GO:0003935">
    <property type="term" value="F:GTP cyclohydrolase II activity"/>
    <property type="evidence" value="ECO:0007669"/>
    <property type="project" value="UniProtKB-UniRule"/>
</dbReference>
<dbReference type="GO" id="GO:0008270">
    <property type="term" value="F:zinc ion binding"/>
    <property type="evidence" value="ECO:0007669"/>
    <property type="project" value="UniProtKB-UniRule"/>
</dbReference>
<dbReference type="GO" id="GO:0009231">
    <property type="term" value="P:riboflavin biosynthetic process"/>
    <property type="evidence" value="ECO:0007669"/>
    <property type="project" value="UniProtKB-UniRule"/>
</dbReference>
<dbReference type="CDD" id="cd00641">
    <property type="entry name" value="GTP_cyclohydro2"/>
    <property type="match status" value="1"/>
</dbReference>
<dbReference type="FunFam" id="3.40.50.10990:FF:000002">
    <property type="entry name" value="GTP cyclohydrolase-2"/>
    <property type="match status" value="1"/>
</dbReference>
<dbReference type="Gene3D" id="3.40.50.10990">
    <property type="entry name" value="GTP cyclohydrolase II"/>
    <property type="match status" value="1"/>
</dbReference>
<dbReference type="HAMAP" id="MF_00179">
    <property type="entry name" value="RibA"/>
    <property type="match status" value="1"/>
</dbReference>
<dbReference type="InterPro" id="IPR032677">
    <property type="entry name" value="GTP_cyclohydro_II"/>
</dbReference>
<dbReference type="InterPro" id="IPR000926">
    <property type="entry name" value="RibA"/>
</dbReference>
<dbReference type="InterPro" id="IPR036144">
    <property type="entry name" value="RibA-like_sf"/>
</dbReference>
<dbReference type="NCBIfam" id="NF001591">
    <property type="entry name" value="PRK00393.1"/>
    <property type="match status" value="1"/>
</dbReference>
<dbReference type="NCBIfam" id="TIGR00505">
    <property type="entry name" value="ribA"/>
    <property type="match status" value="1"/>
</dbReference>
<dbReference type="PANTHER" id="PTHR21327:SF18">
    <property type="entry name" value="3,4-DIHYDROXY-2-BUTANONE 4-PHOSPHATE SYNTHASE"/>
    <property type="match status" value="1"/>
</dbReference>
<dbReference type="PANTHER" id="PTHR21327">
    <property type="entry name" value="GTP CYCLOHYDROLASE II-RELATED"/>
    <property type="match status" value="1"/>
</dbReference>
<dbReference type="Pfam" id="PF00925">
    <property type="entry name" value="GTP_cyclohydro2"/>
    <property type="match status" value="1"/>
</dbReference>
<dbReference type="SUPFAM" id="SSF142695">
    <property type="entry name" value="RibA-like"/>
    <property type="match status" value="1"/>
</dbReference>
<sequence>MSIKYIASSKLPTPWGVFEMHGFEDSETGKEHVALTFGTLSPDAPILGRIHSECLTGDALFSLRCDCGFQLQTAMQNVAEEGQGFILYLRQEGRGIGLLNKIRAYELQDQGANTVEANERLGFEADMRKYDMIIPMMEKIGVAKVRLMTNNPRKVKAMQSFGLEVVERVPLQVGKNRYNEGYLKTKSTELGHMMSEHHFTDADTEAKKD</sequence>
<organism>
    <name type="scientific">Shewanella halifaxensis (strain HAW-EB4)</name>
    <dbReference type="NCBI Taxonomy" id="458817"/>
    <lineage>
        <taxon>Bacteria</taxon>
        <taxon>Pseudomonadati</taxon>
        <taxon>Pseudomonadota</taxon>
        <taxon>Gammaproteobacteria</taxon>
        <taxon>Alteromonadales</taxon>
        <taxon>Shewanellaceae</taxon>
        <taxon>Shewanella</taxon>
    </lineage>
</organism>
<feature type="chain" id="PRO_1000077261" description="GTP cyclohydrolase-2">
    <location>
        <begin position="1"/>
        <end position="209"/>
    </location>
</feature>
<feature type="active site" description="Proton acceptor" evidence="1">
    <location>
        <position position="126"/>
    </location>
</feature>
<feature type="active site" description="Nucleophile" evidence="1">
    <location>
        <position position="128"/>
    </location>
</feature>
<feature type="binding site" evidence="1">
    <location>
        <begin position="49"/>
        <end position="53"/>
    </location>
    <ligand>
        <name>GTP</name>
        <dbReference type="ChEBI" id="CHEBI:37565"/>
    </ligand>
</feature>
<feature type="binding site" evidence="1">
    <location>
        <position position="54"/>
    </location>
    <ligand>
        <name>Zn(2+)</name>
        <dbReference type="ChEBI" id="CHEBI:29105"/>
        <note>catalytic</note>
    </ligand>
</feature>
<feature type="binding site" evidence="1">
    <location>
        <position position="65"/>
    </location>
    <ligand>
        <name>Zn(2+)</name>
        <dbReference type="ChEBI" id="CHEBI:29105"/>
        <note>catalytic</note>
    </ligand>
</feature>
<feature type="binding site" evidence="1">
    <location>
        <position position="67"/>
    </location>
    <ligand>
        <name>Zn(2+)</name>
        <dbReference type="ChEBI" id="CHEBI:29105"/>
        <note>catalytic</note>
    </ligand>
</feature>
<feature type="binding site" evidence="1">
    <location>
        <position position="70"/>
    </location>
    <ligand>
        <name>GTP</name>
        <dbReference type="ChEBI" id="CHEBI:37565"/>
    </ligand>
</feature>
<feature type="binding site" evidence="1">
    <location>
        <begin position="92"/>
        <end position="94"/>
    </location>
    <ligand>
        <name>GTP</name>
        <dbReference type="ChEBI" id="CHEBI:37565"/>
    </ligand>
</feature>
<feature type="binding site" evidence="1">
    <location>
        <position position="114"/>
    </location>
    <ligand>
        <name>GTP</name>
        <dbReference type="ChEBI" id="CHEBI:37565"/>
    </ligand>
</feature>
<feature type="binding site" evidence="1">
    <location>
        <position position="149"/>
    </location>
    <ligand>
        <name>GTP</name>
        <dbReference type="ChEBI" id="CHEBI:37565"/>
    </ligand>
</feature>
<feature type="binding site" evidence="1">
    <location>
        <position position="154"/>
    </location>
    <ligand>
        <name>GTP</name>
        <dbReference type="ChEBI" id="CHEBI:37565"/>
    </ligand>
</feature>
<name>RIBA_SHEHH</name>
<keyword id="KW-0342">GTP-binding</keyword>
<keyword id="KW-0378">Hydrolase</keyword>
<keyword id="KW-0479">Metal-binding</keyword>
<keyword id="KW-0547">Nucleotide-binding</keyword>
<keyword id="KW-0686">Riboflavin biosynthesis</keyword>
<keyword id="KW-0862">Zinc</keyword>